<feature type="chain" id="PRO_1000149001" description="Putative transport protein YidE">
    <location>
        <begin position="1"/>
        <end position="553"/>
    </location>
</feature>
<feature type="transmembrane region" description="Helical" evidence="1">
    <location>
        <begin position="4"/>
        <end position="24"/>
    </location>
</feature>
<feature type="transmembrane region" description="Helical" evidence="1">
    <location>
        <begin position="28"/>
        <end position="48"/>
    </location>
</feature>
<feature type="transmembrane region" description="Helical" evidence="1">
    <location>
        <begin position="65"/>
        <end position="85"/>
    </location>
</feature>
<feature type="transmembrane region" description="Helical" evidence="1">
    <location>
        <begin position="95"/>
        <end position="115"/>
    </location>
</feature>
<feature type="transmembrane region" description="Helical" evidence="1">
    <location>
        <begin position="158"/>
        <end position="178"/>
    </location>
</feature>
<feature type="transmembrane region" description="Helical" evidence="1">
    <location>
        <begin position="371"/>
        <end position="391"/>
    </location>
</feature>
<feature type="transmembrane region" description="Helical" evidence="1">
    <location>
        <begin position="393"/>
        <end position="413"/>
    </location>
</feature>
<feature type="transmembrane region" description="Helical" evidence="1">
    <location>
        <begin position="439"/>
        <end position="459"/>
    </location>
</feature>
<feature type="transmembrane region" description="Helical" evidence="1">
    <location>
        <begin position="464"/>
        <end position="484"/>
    </location>
</feature>
<feature type="transmembrane region" description="Helical" evidence="1">
    <location>
        <begin position="493"/>
        <end position="513"/>
    </location>
</feature>
<feature type="transmembrane region" description="Helical" evidence="1">
    <location>
        <begin position="533"/>
        <end position="553"/>
    </location>
</feature>
<feature type="domain" description="RCK C-terminal 1" evidence="1">
    <location>
        <begin position="191"/>
        <end position="276"/>
    </location>
</feature>
<feature type="domain" description="RCK C-terminal 2" evidence="1">
    <location>
        <begin position="279"/>
        <end position="361"/>
    </location>
</feature>
<keyword id="KW-1003">Cell membrane</keyword>
<keyword id="KW-0472">Membrane</keyword>
<keyword id="KW-0677">Repeat</keyword>
<keyword id="KW-0812">Transmembrane</keyword>
<keyword id="KW-1133">Transmembrane helix</keyword>
<keyword id="KW-0813">Transport</keyword>
<proteinExistence type="inferred from homology"/>
<dbReference type="EMBL" id="CU928162">
    <property type="protein sequence ID" value="CAR10502.2"/>
    <property type="molecule type" value="Genomic_DNA"/>
</dbReference>
<dbReference type="RefSeq" id="WP_001279773.1">
    <property type="nucleotide sequence ID" value="NC_011745.1"/>
</dbReference>
<dbReference type="SMR" id="B7N2D1"/>
<dbReference type="KEGG" id="ecq:ECED1_4376"/>
<dbReference type="HOGENOM" id="CLU_035023_3_1_6"/>
<dbReference type="Proteomes" id="UP000000748">
    <property type="component" value="Chromosome"/>
</dbReference>
<dbReference type="GO" id="GO:0005886">
    <property type="term" value="C:plasma membrane"/>
    <property type="evidence" value="ECO:0007669"/>
    <property type="project" value="UniProtKB-SubCell"/>
</dbReference>
<dbReference type="GO" id="GO:0008324">
    <property type="term" value="F:monoatomic cation transmembrane transporter activity"/>
    <property type="evidence" value="ECO:0007669"/>
    <property type="project" value="InterPro"/>
</dbReference>
<dbReference type="GO" id="GO:0006813">
    <property type="term" value="P:potassium ion transport"/>
    <property type="evidence" value="ECO:0007669"/>
    <property type="project" value="InterPro"/>
</dbReference>
<dbReference type="FunFam" id="3.30.70.1450:FF:000004">
    <property type="entry name" value="Putative transport protein YidE"/>
    <property type="match status" value="1"/>
</dbReference>
<dbReference type="Gene3D" id="3.30.70.1450">
    <property type="entry name" value="Regulator of K+ conductance, C-terminal domain"/>
    <property type="match status" value="2"/>
</dbReference>
<dbReference type="HAMAP" id="MF_01016">
    <property type="entry name" value="YidE"/>
    <property type="match status" value="1"/>
</dbReference>
<dbReference type="InterPro" id="IPR050144">
    <property type="entry name" value="AAE_transporter"/>
</dbReference>
<dbReference type="InterPro" id="IPR006037">
    <property type="entry name" value="RCK_C"/>
</dbReference>
<dbReference type="InterPro" id="IPR036721">
    <property type="entry name" value="RCK_C_sf"/>
</dbReference>
<dbReference type="InterPro" id="IPR023018">
    <property type="entry name" value="Transpt_YidE_put"/>
</dbReference>
<dbReference type="InterPro" id="IPR006512">
    <property type="entry name" value="YidE_YbjL"/>
</dbReference>
<dbReference type="NCBIfam" id="NF003007">
    <property type="entry name" value="PRK03818.1"/>
    <property type="match status" value="1"/>
</dbReference>
<dbReference type="NCBIfam" id="TIGR01625">
    <property type="entry name" value="YidE_YbjL_dupl"/>
    <property type="match status" value="2"/>
</dbReference>
<dbReference type="PANTHER" id="PTHR30445">
    <property type="entry name" value="K(+)_H(+) ANTIPORTER SUBUNIT KHTT"/>
    <property type="match status" value="1"/>
</dbReference>
<dbReference type="PANTHER" id="PTHR30445:SF3">
    <property type="entry name" value="TRANSPORT PROTEIN YIDE-RELATED"/>
    <property type="match status" value="1"/>
</dbReference>
<dbReference type="Pfam" id="PF06826">
    <property type="entry name" value="Asp-Al_Ex"/>
    <property type="match status" value="2"/>
</dbReference>
<dbReference type="Pfam" id="PF02080">
    <property type="entry name" value="TrkA_C"/>
    <property type="match status" value="2"/>
</dbReference>
<dbReference type="SUPFAM" id="SSF116726">
    <property type="entry name" value="TrkA C-terminal domain-like"/>
    <property type="match status" value="2"/>
</dbReference>
<dbReference type="PROSITE" id="PS51202">
    <property type="entry name" value="RCK_C"/>
    <property type="match status" value="2"/>
</dbReference>
<gene>
    <name evidence="1" type="primary">yidE</name>
    <name type="ordered locus">ECED1_4376</name>
</gene>
<organism>
    <name type="scientific">Escherichia coli O81 (strain ED1a)</name>
    <dbReference type="NCBI Taxonomy" id="585397"/>
    <lineage>
        <taxon>Bacteria</taxon>
        <taxon>Pseudomonadati</taxon>
        <taxon>Pseudomonadota</taxon>
        <taxon>Gammaproteobacteria</taxon>
        <taxon>Enterobacterales</taxon>
        <taxon>Enterobacteriaceae</taxon>
        <taxon>Escherichia</taxon>
    </lineage>
</organism>
<comment type="subcellular location">
    <subcellularLocation>
        <location evidence="1">Cell membrane</location>
        <topology evidence="1">Multi-pass membrane protein</topology>
    </subcellularLocation>
</comment>
<comment type="similarity">
    <text evidence="1">Belongs to the AAE transporter (TC 2.A.81) family. YidE subfamily.</text>
</comment>
<reference key="1">
    <citation type="journal article" date="2009" name="PLoS Genet.">
        <title>Organised genome dynamics in the Escherichia coli species results in highly diverse adaptive paths.</title>
        <authorList>
            <person name="Touchon M."/>
            <person name="Hoede C."/>
            <person name="Tenaillon O."/>
            <person name="Barbe V."/>
            <person name="Baeriswyl S."/>
            <person name="Bidet P."/>
            <person name="Bingen E."/>
            <person name="Bonacorsi S."/>
            <person name="Bouchier C."/>
            <person name="Bouvet O."/>
            <person name="Calteau A."/>
            <person name="Chiapello H."/>
            <person name="Clermont O."/>
            <person name="Cruveiller S."/>
            <person name="Danchin A."/>
            <person name="Diard M."/>
            <person name="Dossat C."/>
            <person name="Karoui M.E."/>
            <person name="Frapy E."/>
            <person name="Garry L."/>
            <person name="Ghigo J.M."/>
            <person name="Gilles A.M."/>
            <person name="Johnson J."/>
            <person name="Le Bouguenec C."/>
            <person name="Lescat M."/>
            <person name="Mangenot S."/>
            <person name="Martinez-Jehanne V."/>
            <person name="Matic I."/>
            <person name="Nassif X."/>
            <person name="Oztas S."/>
            <person name="Petit M.A."/>
            <person name="Pichon C."/>
            <person name="Rouy Z."/>
            <person name="Ruf C.S."/>
            <person name="Schneider D."/>
            <person name="Tourret J."/>
            <person name="Vacherie B."/>
            <person name="Vallenet D."/>
            <person name="Medigue C."/>
            <person name="Rocha E.P.C."/>
            <person name="Denamur E."/>
        </authorList>
    </citation>
    <scope>NUCLEOTIDE SEQUENCE [LARGE SCALE GENOMIC DNA]</scope>
    <source>
        <strain>ED1a</strain>
    </source>
</reference>
<accession>B7N2D1</accession>
<protein>
    <recommendedName>
        <fullName evidence="1">Putative transport protein YidE</fullName>
    </recommendedName>
</protein>
<evidence type="ECO:0000255" key="1">
    <source>
        <dbReference type="HAMAP-Rule" id="MF_01016"/>
    </source>
</evidence>
<sequence>MSDIALTVSILALVAVVGLFIGNVKFRGVGLGIGGVLFGGIIVGHFVSQAGMTLSSDMLHVIQEFGLILFVYTIGIQVGPGFFASLRVSGLRLNLFAVLIVIIGGLVTAILHKLFDIPLPVVLGIFSGAVTNTPALGAGQQILRDLGTPMAMVDQMGMSYAMAYPFGICGILFTMWMLRVIFRVNVETEAQQHESTRTNGGALIRTINIRVENPNLHNLAIKDVPILNGDKVICSRLKREETLKVPSPETVIQLGDLLHLVGQPADLHNAQLVIGQEVDTSLSTKGTDLRVARVVVTNENVLGKRIRDLHFKERYDVVISRLNRAGVELVASSDISLQFGDILNLVGRPSAIDAVANVLGNAQQKLQQVQMLPVFIGIGLGVLLGSIPVFVPGFPAALKLGLAGGPLIMALILGRIGSIGKLYWFMPPSANLALRELGIVLFLSVVGLKSGGDFIHTLVDGEGLSWIGYGALITAVPLITVGILARMLAKMNYLTMCGMLAGSMTDPPALAFANNLHPTSGAAALSYATVYPLVMFLRIITPQLLAVLFWSIG</sequence>
<name>YIDE_ECO81</name>